<organism>
    <name type="scientific">Mycobacterium tuberculosis (strain ATCC 25618 / H37Rv)</name>
    <dbReference type="NCBI Taxonomy" id="83332"/>
    <lineage>
        <taxon>Bacteria</taxon>
        <taxon>Bacillati</taxon>
        <taxon>Actinomycetota</taxon>
        <taxon>Actinomycetes</taxon>
        <taxon>Mycobacteriales</taxon>
        <taxon>Mycobacteriaceae</taxon>
        <taxon>Mycobacterium</taxon>
        <taxon>Mycobacterium tuberculosis complex</taxon>
    </lineage>
</organism>
<proteinExistence type="evidence at protein level"/>
<evidence type="ECO:0000250" key="1"/>
<evidence type="ECO:0000255" key="2">
    <source>
        <dbReference type="PROSITE-ProRule" id="PRU00464"/>
    </source>
</evidence>
<evidence type="ECO:0000256" key="3">
    <source>
        <dbReference type="SAM" id="MobiDB-lite"/>
    </source>
</evidence>
<evidence type="ECO:0000269" key="4">
    <source>
    </source>
</evidence>
<evidence type="ECO:0000269" key="5">
    <source>
    </source>
</evidence>
<evidence type="ECO:0007829" key="6">
    <source>
        <dbReference type="PDB" id="3ANO"/>
    </source>
</evidence>
<evidence type="ECO:0007829" key="7">
    <source>
        <dbReference type="PDB" id="3WO5"/>
    </source>
</evidence>
<sequence length="195" mass="21869">MSDEDRTDRATEDHTIFDRGVGQRDQLQRLWTPYRMNYLAEAPVKRDPNSSASPAQPFTEIPQLSDEEGLVVARGKLVYAVLNLYPYNPGHLMVVPYRRVSELEDLTDLESAELMAFTQKAIRVIKNVSRPHGFNVGLNLGTSAGGSLAEHLHVHVVPRWGGDANFITIIGGSKVIPQLLRDTRRLLATEWARQP</sequence>
<accession>P9WMK9</accession>
<accession>L0TA61</accession>
<accession>O06201</accession>
<accession>Q7D6W5</accession>
<protein>
    <recommendedName>
        <fullName>AP-4-A phosphorylase</fullName>
        <ecNumber>2.7.7.53</ecNumber>
    </recommendedName>
    <alternativeName>
        <fullName>ATP adenylyltransferase</fullName>
    </alternativeName>
    <alternativeName>
        <fullName>Diadenosine 5',5'''-P1,P4-tetraphosphate phosphorylase</fullName>
        <shortName>AP,A phosphorylase</shortName>
    </alternativeName>
</protein>
<comment type="function">
    <text evidence="4 5">Catabolizes diadenosine 5',5'''-P1,P4-tetraphosphate (Ap4A) into ADP and ATP. It does not catalyze the reverse phosphorolysis reaction. The optimum substrates are dinucleoside polyphosphates containing four or five phosphate residues.</text>
</comment>
<comment type="catalytic activity">
    <reaction evidence="5">
        <text>ADP + ATP + H(+) = P(1),P(4)-bis(5'-adenosyl) tetraphosphate + phosphate</text>
        <dbReference type="Rhea" id="RHEA:16577"/>
        <dbReference type="ChEBI" id="CHEBI:15378"/>
        <dbReference type="ChEBI" id="CHEBI:30616"/>
        <dbReference type="ChEBI" id="CHEBI:43474"/>
        <dbReference type="ChEBI" id="CHEBI:58141"/>
        <dbReference type="ChEBI" id="CHEBI:456216"/>
        <dbReference type="EC" id="2.7.7.53"/>
    </reaction>
</comment>
<comment type="cofactor">
    <cofactor evidence="4">
        <name>Mn(2+)</name>
        <dbReference type="ChEBI" id="CHEBI:29035"/>
    </cofactor>
    <cofactor evidence="4">
        <name>Co(2+)</name>
        <dbReference type="ChEBI" id="CHEBI:48828"/>
    </cofactor>
    <cofactor evidence="4">
        <name>Ca(2+)</name>
        <dbReference type="ChEBI" id="CHEBI:29108"/>
    </cofactor>
    <cofactor evidence="4">
        <name>Mg(2+)</name>
        <dbReference type="ChEBI" id="CHEBI:18420"/>
    </cofactor>
    <text evidence="4">Binds 1 divalent metal ion per subunit. Mn(2+) is the most efficient metal, but can also use Co(2+), Ca(2+) and Mg(2+).</text>
</comment>
<comment type="biophysicochemical properties">
    <kinetics>
        <KM evidence="4">0.1 mM for Ap4A (at 37 degrees Celsius and pH 7.6)</KM>
        <KM evidence="4">0.94 mM for phosphate (at 37 degrees Celsius and pH 7.6)</KM>
        <Vmax evidence="4">21.87 umol/min/mg enzyme toward Ap4A(at 37 degrees Celsius and pH 7.6)</Vmax>
        <Vmax evidence="4">26.96 umol/min/mg enzyme toward phosphate (at 37 degrees Celsius and pH 7.6)</Vmax>
    </kinetics>
    <phDependence>
        <text evidence="4">Optimum pH is 8.</text>
    </phDependence>
    <temperatureDependence>
        <text evidence="4">Optimum temperature is 30 degrees Celsius. The activity completely disappears after treatment at 65 degrees Celsius for 10 minutes.</text>
    </temperatureDependence>
</comment>
<comment type="subunit">
    <text evidence="4 5">Homotetramer.</text>
</comment>
<comment type="miscellaneous">
    <text>Rv2613c is a unique Ap4A phosphorylase with a primary structure homologous to that of Ap4A hydrolase rather than typical Ap4A phosphorylases. Was identified as a high-confidence drug target.</text>
</comment>
<dbReference type="EC" id="2.7.7.53"/>
<dbReference type="EMBL" id="AL123456">
    <property type="protein sequence ID" value="CCP45410.1"/>
    <property type="molecule type" value="Genomic_DNA"/>
</dbReference>
<dbReference type="PIR" id="D70571">
    <property type="entry name" value="D70571"/>
</dbReference>
<dbReference type="RefSeq" id="NP_217129.1">
    <property type="nucleotide sequence ID" value="NC_000962.3"/>
</dbReference>
<dbReference type="RefSeq" id="WP_003413484.1">
    <property type="nucleotide sequence ID" value="NZ_NVQJ01000023.1"/>
</dbReference>
<dbReference type="PDB" id="3ANO">
    <property type="method" value="X-ray"/>
    <property type="resolution" value="1.89 A"/>
    <property type="chains" value="A/B=1-195"/>
</dbReference>
<dbReference type="PDB" id="3WO5">
    <property type="method" value="X-ray"/>
    <property type="resolution" value="2.79 A"/>
    <property type="chains" value="A/B=1-195"/>
</dbReference>
<dbReference type="PDBsum" id="3ANO"/>
<dbReference type="PDBsum" id="3WO5"/>
<dbReference type="SMR" id="P9WMK9"/>
<dbReference type="STRING" id="83332.Rv2613c"/>
<dbReference type="BindingDB" id="P9WMK9"/>
<dbReference type="PaxDb" id="83332-Rv2613c"/>
<dbReference type="DNASU" id="888193"/>
<dbReference type="GeneID" id="888193"/>
<dbReference type="KEGG" id="mtu:Rv2613c"/>
<dbReference type="KEGG" id="mtv:RVBD_2613c"/>
<dbReference type="TubercuList" id="Rv2613c"/>
<dbReference type="eggNOG" id="COG0537">
    <property type="taxonomic scope" value="Bacteria"/>
</dbReference>
<dbReference type="InParanoid" id="P9WMK9"/>
<dbReference type="OrthoDB" id="9784774at2"/>
<dbReference type="PhylomeDB" id="P9WMK9"/>
<dbReference type="BRENDA" id="2.7.7.53">
    <property type="organism ID" value="3445"/>
</dbReference>
<dbReference type="SABIO-RK" id="P9WMK9"/>
<dbReference type="EvolutionaryTrace" id="P9WMK9"/>
<dbReference type="Proteomes" id="UP000001584">
    <property type="component" value="Chromosome"/>
</dbReference>
<dbReference type="GO" id="GO:0005886">
    <property type="term" value="C:plasma membrane"/>
    <property type="evidence" value="ECO:0007005"/>
    <property type="project" value="MTBBASE"/>
</dbReference>
<dbReference type="GO" id="GO:0005524">
    <property type="term" value="F:ATP binding"/>
    <property type="evidence" value="ECO:0007669"/>
    <property type="project" value="UniProtKB-KW"/>
</dbReference>
<dbReference type="GO" id="GO:0003877">
    <property type="term" value="F:ATP:ADP adenylyltransferase activity"/>
    <property type="evidence" value="ECO:0000314"/>
    <property type="project" value="MTBBASE"/>
</dbReference>
<dbReference type="GO" id="GO:0008796">
    <property type="term" value="F:bis(5'-nucleosyl)-tetraphosphatase activity"/>
    <property type="evidence" value="ECO:0000314"/>
    <property type="project" value="UniProtKB"/>
</dbReference>
<dbReference type="GO" id="GO:0015967">
    <property type="term" value="P:diadenosine tetraphosphate catabolic process"/>
    <property type="evidence" value="ECO:0000314"/>
    <property type="project" value="MTBBASE"/>
</dbReference>
<dbReference type="CDD" id="cd01275">
    <property type="entry name" value="FHIT"/>
    <property type="match status" value="1"/>
</dbReference>
<dbReference type="FunFam" id="3.30.428.10:FF:000022">
    <property type="entry name" value="AP-4-A phosphorylase"/>
    <property type="match status" value="1"/>
</dbReference>
<dbReference type="Gene3D" id="3.30.428.10">
    <property type="entry name" value="HIT-like"/>
    <property type="match status" value="1"/>
</dbReference>
<dbReference type="InterPro" id="IPR052908">
    <property type="entry name" value="AP-4-A_phosphorylase"/>
</dbReference>
<dbReference type="InterPro" id="IPR039383">
    <property type="entry name" value="FHIT"/>
</dbReference>
<dbReference type="InterPro" id="IPR011146">
    <property type="entry name" value="HIT-like"/>
</dbReference>
<dbReference type="InterPro" id="IPR036265">
    <property type="entry name" value="HIT-like_sf"/>
</dbReference>
<dbReference type="PANTHER" id="PTHR42997:SF1">
    <property type="entry name" value="AP-4-A PHOSPHORYLASE"/>
    <property type="match status" value="1"/>
</dbReference>
<dbReference type="PANTHER" id="PTHR42997">
    <property type="entry name" value="HIT FAMILY HYDROLASE"/>
    <property type="match status" value="1"/>
</dbReference>
<dbReference type="Pfam" id="PF01230">
    <property type="entry name" value="HIT"/>
    <property type="match status" value="1"/>
</dbReference>
<dbReference type="SUPFAM" id="SSF54197">
    <property type="entry name" value="HIT-like"/>
    <property type="match status" value="1"/>
</dbReference>
<dbReference type="PROSITE" id="PS51084">
    <property type="entry name" value="HIT_2"/>
    <property type="match status" value="1"/>
</dbReference>
<reference key="1">
    <citation type="journal article" date="1998" name="Nature">
        <title>Deciphering the biology of Mycobacterium tuberculosis from the complete genome sequence.</title>
        <authorList>
            <person name="Cole S.T."/>
            <person name="Brosch R."/>
            <person name="Parkhill J."/>
            <person name="Garnier T."/>
            <person name="Churcher C.M."/>
            <person name="Harris D.E."/>
            <person name="Gordon S.V."/>
            <person name="Eiglmeier K."/>
            <person name="Gas S."/>
            <person name="Barry C.E. III"/>
            <person name="Tekaia F."/>
            <person name="Badcock K."/>
            <person name="Basham D."/>
            <person name="Brown D."/>
            <person name="Chillingworth T."/>
            <person name="Connor R."/>
            <person name="Davies R.M."/>
            <person name="Devlin K."/>
            <person name="Feltwell T."/>
            <person name="Gentles S."/>
            <person name="Hamlin N."/>
            <person name="Holroyd S."/>
            <person name="Hornsby T."/>
            <person name="Jagels K."/>
            <person name="Krogh A."/>
            <person name="McLean J."/>
            <person name="Moule S."/>
            <person name="Murphy L.D."/>
            <person name="Oliver S."/>
            <person name="Osborne J."/>
            <person name="Quail M.A."/>
            <person name="Rajandream M.A."/>
            <person name="Rogers J."/>
            <person name="Rutter S."/>
            <person name="Seeger K."/>
            <person name="Skelton S."/>
            <person name="Squares S."/>
            <person name="Squares R."/>
            <person name="Sulston J.E."/>
            <person name="Taylor K."/>
            <person name="Whitehead S."/>
            <person name="Barrell B.G."/>
        </authorList>
    </citation>
    <scope>NUCLEOTIDE SEQUENCE [LARGE SCALE GENOMIC DNA]</scope>
    <source>
        <strain>ATCC 25618 / H37Rv</strain>
    </source>
</reference>
<reference key="2">
    <citation type="journal article" date="2002" name="Microbiology">
        <title>Re-annotation of the genome sequence of Mycobacterium tuberculosis H37Rv.</title>
        <authorList>
            <person name="Camus J.-C."/>
            <person name="Pryor M.J."/>
            <person name="Medigue C."/>
            <person name="Cole S.T."/>
        </authorList>
    </citation>
    <scope>SEQUENCE REVISION</scope>
    <source>
        <strain>ATCC 25618 / H37Rv</strain>
    </source>
</reference>
<reference key="3">
    <citation type="journal article" date="2010" name="Protein Expr. Purif.">
        <title>Purification and molecular characterization of a novel diadenosine 5',5'''-P(1),P(4)-tetraphosphate phosphorylase from Mycobacterium tuberculosis H37Rv.</title>
        <authorList>
            <person name="Mori S."/>
            <person name="Shibayama K."/>
            <person name="Wachino J."/>
            <person name="Arakawa Y."/>
        </authorList>
    </citation>
    <scope>PROTEIN SEQUENCE OF N-TERMINUS</scope>
    <scope>FUNCTION</scope>
    <scope>SUBUNIT</scope>
    <scope>SUBSTRATE SPECIFICITY</scope>
    <scope>COFACTOR</scope>
    <scope>BIOPHYSICOCHEMICAL PROPERTIES</scope>
    <scope>IDENTIFICATION BY MASS SPECTROMETRY</scope>
    <source>
        <strain>ATCC 25618 / H37Rv</strain>
    </source>
</reference>
<reference key="4">
    <citation type="journal article" date="2008" name="BMC Syst. Biol.">
        <title>targetTB: a target identification pipeline for Mycobacterium tuberculosis through an interactome, reactome and genome-scale structural analysis.</title>
        <authorList>
            <person name="Raman K."/>
            <person name="Yeturu K."/>
            <person name="Chandra N."/>
        </authorList>
    </citation>
    <scope>IDENTIFICATION AS A DRUG TARGET [LARGE SCALE ANALYSIS]</scope>
</reference>
<reference key="5">
    <citation type="journal article" date="2011" name="Mol. Cell. Proteomics">
        <title>Proteogenomic analysis of Mycobacterium tuberculosis by high resolution mass spectrometry.</title>
        <authorList>
            <person name="Kelkar D.S."/>
            <person name="Kumar D."/>
            <person name="Kumar P."/>
            <person name="Balakrishnan L."/>
            <person name="Muthusamy B."/>
            <person name="Yadav A.K."/>
            <person name="Shrivastava P."/>
            <person name="Marimuthu A."/>
            <person name="Anand S."/>
            <person name="Sundaram H."/>
            <person name="Kingsbury R."/>
            <person name="Harsha H.C."/>
            <person name="Nair B."/>
            <person name="Prasad T.S."/>
            <person name="Chauhan D.S."/>
            <person name="Katoch K."/>
            <person name="Katoch V.M."/>
            <person name="Kumar P."/>
            <person name="Chaerkady R."/>
            <person name="Ramachandran S."/>
            <person name="Dash D."/>
            <person name="Pandey A."/>
        </authorList>
    </citation>
    <scope>IDENTIFICATION BY MASS SPECTROMETRY [LARGE SCALE ANALYSIS]</scope>
    <source>
        <strain>ATCC 25618 / H37Rv</strain>
    </source>
</reference>
<reference key="6">
    <citation type="journal article" date="2011" name="J. Mol. Biol.">
        <title>Structural insights into the novel diadenosine 5',5'''-P(1),P(4)-tetraphosphate phosphorylase from Mycobacterium tuberculosis H37Rv.</title>
        <authorList>
            <person name="Mori S."/>
            <person name="Shibayama K."/>
            <person name="Wachino J."/>
            <person name="Arakawa Y."/>
        </authorList>
    </citation>
    <scope>X-RAY CRYSTALLOGRAPHY (1.89 ANGSTROMS) IN COMPLEX WITH PHOSPHATE</scope>
    <scope>CATALYTIC ACTIVITY</scope>
    <scope>FUNCTION</scope>
    <scope>SUBUNIT</scope>
    <scope>MUTAGENESIS OF ASN-139; GLY-146; SER-147 AND TRP-160</scope>
</reference>
<gene>
    <name type="ordered locus">Rv2613c</name>
</gene>
<name>AP4A_MYCTU</name>
<keyword id="KW-0002">3D-structure</keyword>
<keyword id="KW-0067">ATP-binding</keyword>
<keyword id="KW-0903">Direct protein sequencing</keyword>
<keyword id="KW-0547">Nucleotide-binding</keyword>
<keyword id="KW-0548">Nucleotidyltransferase</keyword>
<keyword id="KW-1185">Reference proteome</keyword>
<keyword id="KW-0808">Transferase</keyword>
<feature type="chain" id="PRO_0000393106" description="AP-4-A phosphorylase">
    <location>
        <begin position="1"/>
        <end position="195"/>
    </location>
</feature>
<feature type="domain" description="HIT" evidence="2">
    <location>
        <begin position="57"/>
        <end position="166"/>
    </location>
</feature>
<feature type="region of interest" description="Disordered" evidence="3">
    <location>
        <begin position="1"/>
        <end position="20"/>
    </location>
</feature>
<feature type="short sequence motif" description="Histidine triad motif">
    <location>
        <begin position="151"/>
        <end position="155"/>
    </location>
</feature>
<feature type="compositionally biased region" description="Basic and acidic residues" evidence="3">
    <location>
        <begin position="1"/>
        <end position="17"/>
    </location>
</feature>
<feature type="active site" description="Tele-AMP-histidine intermediate" evidence="1">
    <location>
        <position position="153"/>
    </location>
</feature>
<feature type="mutagenesis site" description="Abolishes enzyme activity." evidence="5">
    <original>N</original>
    <variation>A</variation>
    <variation>Q</variation>
    <location>
        <position position="139"/>
    </location>
</feature>
<feature type="mutagenesis site" description="Reduces enzyme activity." evidence="5">
    <original>G</original>
    <variation>Q</variation>
    <location>
        <position position="146"/>
    </location>
</feature>
<feature type="mutagenesis site" description="Reduces enzyme activity." evidence="5">
    <original>S</original>
    <variation>A</variation>
    <variation>T</variation>
    <location>
        <position position="147"/>
    </location>
</feature>
<feature type="mutagenesis site" description="Abolishes enzyme activity." evidence="5">
    <original>W</original>
    <variation>A</variation>
    <location>
        <position position="160"/>
    </location>
</feature>
<feature type="strand" evidence="7">
    <location>
        <begin position="48"/>
        <end position="50"/>
    </location>
</feature>
<feature type="helix" evidence="6">
    <location>
        <begin position="57"/>
        <end position="60"/>
    </location>
</feature>
<feature type="helix" evidence="6">
    <location>
        <begin position="61"/>
        <end position="63"/>
    </location>
</feature>
<feature type="helix" evidence="6">
    <location>
        <begin position="66"/>
        <end position="69"/>
    </location>
</feature>
<feature type="strand" evidence="6">
    <location>
        <begin position="71"/>
        <end position="74"/>
    </location>
</feature>
<feature type="strand" evidence="6">
    <location>
        <begin position="76"/>
        <end position="82"/>
    </location>
</feature>
<feature type="strand" evidence="6">
    <location>
        <begin position="92"/>
        <end position="98"/>
    </location>
</feature>
<feature type="helix" evidence="6">
    <location>
        <begin position="103"/>
        <end position="105"/>
    </location>
</feature>
<feature type="helix" evidence="6">
    <location>
        <begin position="108"/>
        <end position="128"/>
    </location>
</feature>
<feature type="strand" evidence="6">
    <location>
        <begin position="132"/>
        <end position="141"/>
    </location>
</feature>
<feature type="helix" evidence="6">
    <location>
        <begin position="142"/>
        <end position="144"/>
    </location>
</feature>
<feature type="turn" evidence="6">
    <location>
        <begin position="147"/>
        <end position="150"/>
    </location>
</feature>
<feature type="strand" evidence="6">
    <location>
        <begin position="154"/>
        <end position="159"/>
    </location>
</feature>
<feature type="helix" evidence="6">
    <location>
        <begin position="163"/>
        <end position="165"/>
    </location>
</feature>
<feature type="helix" evidence="6">
    <location>
        <begin position="178"/>
        <end position="192"/>
    </location>
</feature>